<gene>
    <name type="ordered locus">MADE_1020535</name>
</gene>
<feature type="chain" id="PRO_1000130596" description="Nucleotide-binding protein MADE_1020535">
    <location>
        <begin position="1"/>
        <end position="160"/>
    </location>
</feature>
<keyword id="KW-0547">Nucleotide-binding</keyword>
<sequence>MPSFDIVSEINMEEVRNATDNASRELSTRFDFRGIDASFEYKDKTVVMKAEAEFQLQQMESMFRTAMSKRNVDTSSMDVKPYDAHGKTYRQTIAFKEGIEQPTAKKIVKLIKDAKVKVQTAIQGEELRVTGKKRDDLQQAIALVKEANLGQPFQFKNFRD</sequence>
<proteinExistence type="inferred from homology"/>
<dbReference type="EMBL" id="CP001103">
    <property type="protein sequence ID" value="AEB00230.1"/>
    <property type="molecule type" value="Genomic_DNA"/>
</dbReference>
<dbReference type="RefSeq" id="WP_012520233.1">
    <property type="nucleotide sequence ID" value="NC_011138.3"/>
</dbReference>
<dbReference type="SMR" id="B4RS97"/>
<dbReference type="KEGG" id="amc:MADE_1020535"/>
<dbReference type="HOGENOM" id="CLU_099839_1_0_6"/>
<dbReference type="Proteomes" id="UP000001870">
    <property type="component" value="Chromosome"/>
</dbReference>
<dbReference type="GO" id="GO:0005829">
    <property type="term" value="C:cytosol"/>
    <property type="evidence" value="ECO:0007669"/>
    <property type="project" value="TreeGrafter"/>
</dbReference>
<dbReference type="GO" id="GO:0000166">
    <property type="term" value="F:nucleotide binding"/>
    <property type="evidence" value="ECO:0007669"/>
    <property type="project" value="TreeGrafter"/>
</dbReference>
<dbReference type="CDD" id="cd11740">
    <property type="entry name" value="YajQ_like"/>
    <property type="match status" value="1"/>
</dbReference>
<dbReference type="FunFam" id="3.30.70.860:FF:000001">
    <property type="entry name" value="UPF0234 protein YajQ"/>
    <property type="match status" value="1"/>
</dbReference>
<dbReference type="Gene3D" id="3.30.70.860">
    <property type="match status" value="1"/>
</dbReference>
<dbReference type="Gene3D" id="3.30.70.990">
    <property type="entry name" value="YajQ-like, domain 2"/>
    <property type="match status" value="1"/>
</dbReference>
<dbReference type="HAMAP" id="MF_00632">
    <property type="entry name" value="YajQ"/>
    <property type="match status" value="1"/>
</dbReference>
<dbReference type="InterPro" id="IPR007551">
    <property type="entry name" value="DUF520"/>
</dbReference>
<dbReference type="InterPro" id="IPR035571">
    <property type="entry name" value="UPF0234-like_C"/>
</dbReference>
<dbReference type="InterPro" id="IPR035570">
    <property type="entry name" value="UPF0234_N"/>
</dbReference>
<dbReference type="InterPro" id="IPR036183">
    <property type="entry name" value="YajQ-like_sf"/>
</dbReference>
<dbReference type="NCBIfam" id="NF003819">
    <property type="entry name" value="PRK05412.1"/>
    <property type="match status" value="1"/>
</dbReference>
<dbReference type="PANTHER" id="PTHR30476">
    <property type="entry name" value="UPF0234 PROTEIN YAJQ"/>
    <property type="match status" value="1"/>
</dbReference>
<dbReference type="PANTHER" id="PTHR30476:SF0">
    <property type="entry name" value="UPF0234 PROTEIN YAJQ"/>
    <property type="match status" value="1"/>
</dbReference>
<dbReference type="Pfam" id="PF04461">
    <property type="entry name" value="DUF520"/>
    <property type="match status" value="1"/>
</dbReference>
<dbReference type="SUPFAM" id="SSF89963">
    <property type="entry name" value="YajQ-like"/>
    <property type="match status" value="2"/>
</dbReference>
<name>Y4099_ALTMD</name>
<comment type="function">
    <text evidence="1">Nucleotide-binding protein.</text>
</comment>
<comment type="similarity">
    <text evidence="1">Belongs to the YajQ family.</text>
</comment>
<reference key="1">
    <citation type="journal article" date="2008" name="ISME J.">
        <title>Comparative genomics of two ecotypes of the marine planktonic copiotroph Alteromonas macleodii suggests alternative lifestyles associated with different kinds of particulate organic matter.</title>
        <authorList>
            <person name="Ivars-Martinez E."/>
            <person name="Martin-Cuadrado A.-B."/>
            <person name="D'Auria G."/>
            <person name="Mira A."/>
            <person name="Ferriera S."/>
            <person name="Johnson J."/>
            <person name="Friedman R."/>
            <person name="Rodriguez-Valera F."/>
        </authorList>
    </citation>
    <scope>NUCLEOTIDE SEQUENCE [LARGE SCALE GENOMIC DNA]</scope>
    <source>
        <strain>DSM 17117 / CIP 110805 / LMG 28347 / Deep ecotype</strain>
    </source>
</reference>
<protein>
    <recommendedName>
        <fullName evidence="1">Nucleotide-binding protein MADE_1020535</fullName>
    </recommendedName>
</protein>
<organism>
    <name type="scientific">Alteromonas mediterranea (strain DSM 17117 / CIP 110805 / LMG 28347 / Deep ecotype)</name>
    <dbReference type="NCBI Taxonomy" id="1774373"/>
    <lineage>
        <taxon>Bacteria</taxon>
        <taxon>Pseudomonadati</taxon>
        <taxon>Pseudomonadota</taxon>
        <taxon>Gammaproteobacteria</taxon>
        <taxon>Alteromonadales</taxon>
        <taxon>Alteromonadaceae</taxon>
        <taxon>Alteromonas/Salinimonas group</taxon>
        <taxon>Alteromonas</taxon>
    </lineage>
</organism>
<evidence type="ECO:0000255" key="1">
    <source>
        <dbReference type="HAMAP-Rule" id="MF_00632"/>
    </source>
</evidence>
<accession>B4RS97</accession>
<accession>F2GD52</accession>